<keyword id="KW-0066">ATP synthesis</keyword>
<keyword id="KW-0067">ATP-binding</keyword>
<keyword id="KW-0139">CF(1)</keyword>
<keyword id="KW-0150">Chloroplast</keyword>
<keyword id="KW-0375">Hydrogen ion transport</keyword>
<keyword id="KW-0406">Ion transport</keyword>
<keyword id="KW-0472">Membrane</keyword>
<keyword id="KW-0547">Nucleotide-binding</keyword>
<keyword id="KW-0934">Plastid</keyword>
<keyword id="KW-0793">Thylakoid</keyword>
<keyword id="KW-1278">Translocase</keyword>
<keyword id="KW-0813">Transport</keyword>
<name>ATPB_NICPL</name>
<reference key="1">
    <citation type="journal article" date="1992" name="Science">
        <title>Tentoxin sensitivity of chloroplasts determined by codon 83 of beta subunit of proton-ATPase.</title>
        <authorList>
            <person name="Avni A."/>
            <person name="Anderson J.D."/>
            <person name="Holland N."/>
            <person name="Rochaix J.-D."/>
            <person name="Gromet-Elhanan Z."/>
            <person name="Edelman M."/>
        </authorList>
    </citation>
    <scope>NUCLEOTIDE SEQUENCE [GENOMIC DNA]</scope>
</reference>
<feature type="chain" id="PRO_0000144531" description="ATP synthase subunit beta, chloroplastic">
    <location>
        <begin position="1"/>
        <end position="498"/>
    </location>
</feature>
<feature type="binding site" evidence="1">
    <location>
        <begin position="172"/>
        <end position="179"/>
    </location>
    <ligand>
        <name>ATP</name>
        <dbReference type="ChEBI" id="CHEBI:30616"/>
    </ligand>
</feature>
<protein>
    <recommendedName>
        <fullName evidence="1">ATP synthase subunit beta, chloroplastic</fullName>
        <ecNumber evidence="1">7.1.2.2</ecNumber>
    </recommendedName>
    <alternativeName>
        <fullName evidence="1">ATP synthase F1 sector subunit beta</fullName>
    </alternativeName>
    <alternativeName>
        <fullName evidence="1">F-ATPase subunit beta</fullName>
    </alternativeName>
</protein>
<dbReference type="EC" id="7.1.2.2" evidence="1"/>
<dbReference type="EMBL" id="X61320">
    <property type="protein sequence ID" value="CAA43613.1"/>
    <property type="molecule type" value="Genomic_DNA"/>
</dbReference>
<dbReference type="PIR" id="S15723">
    <property type="entry name" value="PWNTBC"/>
</dbReference>
<dbReference type="SMR" id="P69370"/>
<dbReference type="GO" id="GO:0009535">
    <property type="term" value="C:chloroplast thylakoid membrane"/>
    <property type="evidence" value="ECO:0007669"/>
    <property type="project" value="UniProtKB-SubCell"/>
</dbReference>
<dbReference type="GO" id="GO:0005739">
    <property type="term" value="C:mitochondrion"/>
    <property type="evidence" value="ECO:0007669"/>
    <property type="project" value="GOC"/>
</dbReference>
<dbReference type="GO" id="GO:0045259">
    <property type="term" value="C:proton-transporting ATP synthase complex"/>
    <property type="evidence" value="ECO:0007669"/>
    <property type="project" value="UniProtKB-KW"/>
</dbReference>
<dbReference type="GO" id="GO:0005524">
    <property type="term" value="F:ATP binding"/>
    <property type="evidence" value="ECO:0007669"/>
    <property type="project" value="UniProtKB-UniRule"/>
</dbReference>
<dbReference type="GO" id="GO:0016887">
    <property type="term" value="F:ATP hydrolysis activity"/>
    <property type="evidence" value="ECO:0007669"/>
    <property type="project" value="InterPro"/>
</dbReference>
<dbReference type="GO" id="GO:0046933">
    <property type="term" value="F:proton-transporting ATP synthase activity, rotational mechanism"/>
    <property type="evidence" value="ECO:0007669"/>
    <property type="project" value="UniProtKB-UniRule"/>
</dbReference>
<dbReference type="GO" id="GO:0042776">
    <property type="term" value="P:proton motive force-driven mitochondrial ATP synthesis"/>
    <property type="evidence" value="ECO:0007669"/>
    <property type="project" value="TreeGrafter"/>
</dbReference>
<dbReference type="CDD" id="cd18110">
    <property type="entry name" value="ATP-synt_F1_beta_C"/>
    <property type="match status" value="1"/>
</dbReference>
<dbReference type="CDD" id="cd18115">
    <property type="entry name" value="ATP-synt_F1_beta_N"/>
    <property type="match status" value="1"/>
</dbReference>
<dbReference type="CDD" id="cd01133">
    <property type="entry name" value="F1-ATPase_beta_CD"/>
    <property type="match status" value="1"/>
</dbReference>
<dbReference type="FunFam" id="1.10.1140.10:FF:000001">
    <property type="entry name" value="ATP synthase subunit beta"/>
    <property type="match status" value="1"/>
</dbReference>
<dbReference type="FunFam" id="3.40.50.12240:FF:000006">
    <property type="entry name" value="ATP synthase subunit beta"/>
    <property type="match status" value="1"/>
</dbReference>
<dbReference type="FunFam" id="3.40.50.300:FF:000004">
    <property type="entry name" value="ATP synthase subunit beta"/>
    <property type="match status" value="1"/>
</dbReference>
<dbReference type="FunFam" id="2.40.10.170:FF:000002">
    <property type="entry name" value="ATP synthase subunit beta, chloroplastic"/>
    <property type="match status" value="1"/>
</dbReference>
<dbReference type="Gene3D" id="2.40.10.170">
    <property type="match status" value="1"/>
</dbReference>
<dbReference type="Gene3D" id="1.10.1140.10">
    <property type="entry name" value="Bovine Mitochondrial F1-atpase, Atp Synthase Beta Chain, Chain D, domain 3"/>
    <property type="match status" value="1"/>
</dbReference>
<dbReference type="Gene3D" id="3.40.50.300">
    <property type="entry name" value="P-loop containing nucleotide triphosphate hydrolases"/>
    <property type="match status" value="1"/>
</dbReference>
<dbReference type="HAMAP" id="MF_01347">
    <property type="entry name" value="ATP_synth_beta_bact"/>
    <property type="match status" value="1"/>
</dbReference>
<dbReference type="InterPro" id="IPR003593">
    <property type="entry name" value="AAA+_ATPase"/>
</dbReference>
<dbReference type="InterPro" id="IPR055190">
    <property type="entry name" value="ATP-synt_VA_C"/>
</dbReference>
<dbReference type="InterPro" id="IPR005722">
    <property type="entry name" value="ATP_synth_F1_bsu"/>
</dbReference>
<dbReference type="InterPro" id="IPR020003">
    <property type="entry name" value="ATPase_a/bsu_AS"/>
</dbReference>
<dbReference type="InterPro" id="IPR050053">
    <property type="entry name" value="ATPase_alpha/beta_chains"/>
</dbReference>
<dbReference type="InterPro" id="IPR004100">
    <property type="entry name" value="ATPase_F1/V1/A1_a/bsu_N"/>
</dbReference>
<dbReference type="InterPro" id="IPR036121">
    <property type="entry name" value="ATPase_F1/V1/A1_a/bsu_N_sf"/>
</dbReference>
<dbReference type="InterPro" id="IPR000194">
    <property type="entry name" value="ATPase_F1/V1/A1_a/bsu_nucl-bd"/>
</dbReference>
<dbReference type="InterPro" id="IPR024034">
    <property type="entry name" value="ATPase_F1/V1_b/a_C"/>
</dbReference>
<dbReference type="InterPro" id="IPR027417">
    <property type="entry name" value="P-loop_NTPase"/>
</dbReference>
<dbReference type="NCBIfam" id="TIGR01039">
    <property type="entry name" value="atpD"/>
    <property type="match status" value="1"/>
</dbReference>
<dbReference type="PANTHER" id="PTHR15184">
    <property type="entry name" value="ATP SYNTHASE"/>
    <property type="match status" value="1"/>
</dbReference>
<dbReference type="PANTHER" id="PTHR15184:SF71">
    <property type="entry name" value="ATP SYNTHASE SUBUNIT BETA, MITOCHONDRIAL"/>
    <property type="match status" value="1"/>
</dbReference>
<dbReference type="Pfam" id="PF00006">
    <property type="entry name" value="ATP-synt_ab"/>
    <property type="match status" value="1"/>
</dbReference>
<dbReference type="Pfam" id="PF02874">
    <property type="entry name" value="ATP-synt_ab_N"/>
    <property type="match status" value="1"/>
</dbReference>
<dbReference type="Pfam" id="PF22919">
    <property type="entry name" value="ATP-synt_VA_C"/>
    <property type="match status" value="1"/>
</dbReference>
<dbReference type="SMART" id="SM00382">
    <property type="entry name" value="AAA"/>
    <property type="match status" value="1"/>
</dbReference>
<dbReference type="SUPFAM" id="SSF47917">
    <property type="entry name" value="C-terminal domain of alpha and beta subunits of F1 ATP synthase"/>
    <property type="match status" value="1"/>
</dbReference>
<dbReference type="SUPFAM" id="SSF50615">
    <property type="entry name" value="N-terminal domain of alpha and beta subunits of F1 ATP synthase"/>
    <property type="match status" value="1"/>
</dbReference>
<dbReference type="SUPFAM" id="SSF52540">
    <property type="entry name" value="P-loop containing nucleoside triphosphate hydrolases"/>
    <property type="match status" value="1"/>
</dbReference>
<dbReference type="PROSITE" id="PS00152">
    <property type="entry name" value="ATPASE_ALPHA_BETA"/>
    <property type="match status" value="1"/>
</dbReference>
<comment type="function">
    <text evidence="1">Produces ATP from ADP in the presence of a proton gradient across the membrane. The catalytic sites are hosted primarily by the beta subunits.</text>
</comment>
<comment type="catalytic activity">
    <reaction evidence="1">
        <text>ATP + H2O + 4 H(+)(in) = ADP + phosphate + 5 H(+)(out)</text>
        <dbReference type="Rhea" id="RHEA:57720"/>
        <dbReference type="ChEBI" id="CHEBI:15377"/>
        <dbReference type="ChEBI" id="CHEBI:15378"/>
        <dbReference type="ChEBI" id="CHEBI:30616"/>
        <dbReference type="ChEBI" id="CHEBI:43474"/>
        <dbReference type="ChEBI" id="CHEBI:456216"/>
        <dbReference type="EC" id="7.1.2.2"/>
    </reaction>
</comment>
<comment type="subunit">
    <text evidence="1">F-type ATPases have 2 components, CF(1) - the catalytic core - and CF(0) - the membrane proton channel. CF(1) has five subunits: alpha(3), beta(3), gamma(1), delta(1), epsilon(1). CF(0) has four main subunits: a(1), b(1), b'(1) and c(9-12).</text>
</comment>
<comment type="subcellular location">
    <subcellularLocation>
        <location evidence="1">Plastid</location>
        <location evidence="1">Chloroplast thylakoid membrane</location>
        <topology evidence="1">Peripheral membrane protein</topology>
    </subcellularLocation>
</comment>
<comment type="similarity">
    <text evidence="1">Belongs to the ATPase alpha/beta chains family.</text>
</comment>
<geneLocation type="chloroplast"/>
<accession>P69370</accession>
<accession>P26529</accession>
<sequence>MRINPTTSGSGVSTLEKKNPGRVVQIIGPVLDVAFPPGKMPNIYNALVVQGRDSVGQPINVACEVQQLLGNNRVRAVAMSATDGLTRGMEVIDTGAPISVPVGGATLGRIFNVLGEPVDNLGPVDTSTTSPIHRSAPAFIQLDTKLSIFETGIKVVDLLAPYRRGGKIGLFGGAGVGKTVLIMELINNIAKAHGGVSVFGGVGERTREGNDLYMEMKESGVINEENIAESKVALVYGQMNEPPGARMRVGLTALTMAEYFRDVNEQDVLLFIDNIFRFVQAGSEVSALLGRMPSAVGYQPTLSTEMGSLQERITSTKEGSITSIQAVYVPADDLTDPAPATTFAHLDATTVLSRGLAAKGIYPAVDPLDSTSTMLQPRIVGEEHYETAQRVKQTLQRYKELQDIIAILGLDELSEEDRLLVARARKIERFLSQPFFVAEVFTGSPGKYVGLAETIRGFQLILSGELDGLPEQAFYLVGNIDEATAKAMNLEMESNLKK</sequence>
<gene>
    <name evidence="1" type="primary">atpB</name>
</gene>
<evidence type="ECO:0000255" key="1">
    <source>
        <dbReference type="HAMAP-Rule" id="MF_01347"/>
    </source>
</evidence>
<organism>
    <name type="scientific">Nicotiana plumbaginifolia</name>
    <name type="common">Leadwort-leaved tobacco</name>
    <name type="synonym">Tex-Mex tobacco</name>
    <dbReference type="NCBI Taxonomy" id="4092"/>
    <lineage>
        <taxon>Eukaryota</taxon>
        <taxon>Viridiplantae</taxon>
        <taxon>Streptophyta</taxon>
        <taxon>Embryophyta</taxon>
        <taxon>Tracheophyta</taxon>
        <taxon>Spermatophyta</taxon>
        <taxon>Magnoliopsida</taxon>
        <taxon>eudicotyledons</taxon>
        <taxon>Gunneridae</taxon>
        <taxon>Pentapetalae</taxon>
        <taxon>asterids</taxon>
        <taxon>lamiids</taxon>
        <taxon>Solanales</taxon>
        <taxon>Solanaceae</taxon>
        <taxon>Nicotianoideae</taxon>
        <taxon>Nicotianeae</taxon>
        <taxon>Nicotiana</taxon>
    </lineage>
</organism>
<proteinExistence type="inferred from homology"/>